<dbReference type="EC" id="6.3.4.20" evidence="1"/>
<dbReference type="EMBL" id="AE008923">
    <property type="protein sequence ID" value="AAM37982.1"/>
    <property type="molecule type" value="Genomic_DNA"/>
</dbReference>
<dbReference type="RefSeq" id="WP_005913660.1">
    <property type="nucleotide sequence ID" value="NC_003919.1"/>
</dbReference>
<dbReference type="SMR" id="Q8PHW1"/>
<dbReference type="GeneID" id="66912201"/>
<dbReference type="KEGG" id="xac:XAC3137"/>
<dbReference type="eggNOG" id="COG0603">
    <property type="taxonomic scope" value="Bacteria"/>
</dbReference>
<dbReference type="HOGENOM" id="CLU_081854_1_1_6"/>
<dbReference type="UniPathway" id="UPA00391"/>
<dbReference type="Proteomes" id="UP000000576">
    <property type="component" value="Chromosome"/>
</dbReference>
<dbReference type="GO" id="GO:0005524">
    <property type="term" value="F:ATP binding"/>
    <property type="evidence" value="ECO:0007669"/>
    <property type="project" value="UniProtKB-UniRule"/>
</dbReference>
<dbReference type="GO" id="GO:0016879">
    <property type="term" value="F:ligase activity, forming carbon-nitrogen bonds"/>
    <property type="evidence" value="ECO:0007669"/>
    <property type="project" value="UniProtKB-UniRule"/>
</dbReference>
<dbReference type="GO" id="GO:0008270">
    <property type="term" value="F:zinc ion binding"/>
    <property type="evidence" value="ECO:0007669"/>
    <property type="project" value="UniProtKB-UniRule"/>
</dbReference>
<dbReference type="GO" id="GO:0008616">
    <property type="term" value="P:queuosine biosynthetic process"/>
    <property type="evidence" value="ECO:0007669"/>
    <property type="project" value="UniProtKB-UniRule"/>
</dbReference>
<dbReference type="CDD" id="cd01995">
    <property type="entry name" value="QueC-like"/>
    <property type="match status" value="1"/>
</dbReference>
<dbReference type="FunFam" id="3.40.50.620:FF:000131">
    <property type="entry name" value="7-cyano-7-deazaguanine synthase"/>
    <property type="match status" value="1"/>
</dbReference>
<dbReference type="Gene3D" id="3.40.50.620">
    <property type="entry name" value="HUPs"/>
    <property type="match status" value="1"/>
</dbReference>
<dbReference type="HAMAP" id="MF_01633">
    <property type="entry name" value="QueC"/>
    <property type="match status" value="1"/>
</dbReference>
<dbReference type="InterPro" id="IPR018317">
    <property type="entry name" value="QueC"/>
</dbReference>
<dbReference type="InterPro" id="IPR014729">
    <property type="entry name" value="Rossmann-like_a/b/a_fold"/>
</dbReference>
<dbReference type="NCBIfam" id="TIGR00364">
    <property type="entry name" value="7-cyano-7-deazaguanine synthase QueC"/>
    <property type="match status" value="1"/>
</dbReference>
<dbReference type="PANTHER" id="PTHR42914">
    <property type="entry name" value="7-CYANO-7-DEAZAGUANINE SYNTHASE"/>
    <property type="match status" value="1"/>
</dbReference>
<dbReference type="PANTHER" id="PTHR42914:SF1">
    <property type="entry name" value="7-CYANO-7-DEAZAGUANINE SYNTHASE"/>
    <property type="match status" value="1"/>
</dbReference>
<dbReference type="Pfam" id="PF06508">
    <property type="entry name" value="QueC"/>
    <property type="match status" value="1"/>
</dbReference>
<dbReference type="PIRSF" id="PIRSF006293">
    <property type="entry name" value="ExsB"/>
    <property type="match status" value="1"/>
</dbReference>
<dbReference type="SUPFAM" id="SSF52402">
    <property type="entry name" value="Adenine nucleotide alpha hydrolases-like"/>
    <property type="match status" value="1"/>
</dbReference>
<proteinExistence type="inferred from homology"/>
<feature type="chain" id="PRO_0000246961" description="7-cyano-7-deazaguanine synthase">
    <location>
        <begin position="1"/>
        <end position="224"/>
    </location>
</feature>
<feature type="binding site" evidence="1">
    <location>
        <begin position="8"/>
        <end position="18"/>
    </location>
    <ligand>
        <name>ATP</name>
        <dbReference type="ChEBI" id="CHEBI:30616"/>
    </ligand>
</feature>
<feature type="binding site" evidence="1">
    <location>
        <position position="186"/>
    </location>
    <ligand>
        <name>Zn(2+)</name>
        <dbReference type="ChEBI" id="CHEBI:29105"/>
    </ligand>
</feature>
<feature type="binding site" evidence="1">
    <location>
        <position position="196"/>
    </location>
    <ligand>
        <name>Zn(2+)</name>
        <dbReference type="ChEBI" id="CHEBI:29105"/>
    </ligand>
</feature>
<feature type="binding site" evidence="1">
    <location>
        <position position="199"/>
    </location>
    <ligand>
        <name>Zn(2+)</name>
        <dbReference type="ChEBI" id="CHEBI:29105"/>
    </ligand>
</feature>
<feature type="binding site" evidence="1">
    <location>
        <position position="202"/>
    </location>
    <ligand>
        <name>Zn(2+)</name>
        <dbReference type="ChEBI" id="CHEBI:29105"/>
    </ligand>
</feature>
<accession>Q8PHW1</accession>
<evidence type="ECO:0000255" key="1">
    <source>
        <dbReference type="HAMAP-Rule" id="MF_01633"/>
    </source>
</evidence>
<gene>
    <name evidence="1" type="primary">queC</name>
    <name type="ordered locus">XAC3140</name>
</gene>
<organism>
    <name type="scientific">Xanthomonas axonopodis pv. citri (strain 306)</name>
    <dbReference type="NCBI Taxonomy" id="190486"/>
    <lineage>
        <taxon>Bacteria</taxon>
        <taxon>Pseudomonadati</taxon>
        <taxon>Pseudomonadota</taxon>
        <taxon>Gammaproteobacteria</taxon>
        <taxon>Lysobacterales</taxon>
        <taxon>Lysobacteraceae</taxon>
        <taxon>Xanthomonas</taxon>
    </lineage>
</organism>
<sequence>MKKAVVLLSGGMDSAAVIALAQEQGFAVYALSVRYGQRHTSELDAAARVAAAQGVIAHKVVDVDLRSIGGSALTDDIEVPDAGGDGIPVTYVPARNTIMLSLALGWAEVIGANDLFCGVNAVDYSGYPDCRPEFVRAFEVLANLATKAGVEGAGLRVHAPLQFLSKADIVREGVRLGVDFGVTVSCYRADADGRACGHCDACRLRAAGFADAGIPDPTHYAILS</sequence>
<name>QUEC_XANAC</name>
<reference key="1">
    <citation type="journal article" date="2002" name="Nature">
        <title>Comparison of the genomes of two Xanthomonas pathogens with differing host specificities.</title>
        <authorList>
            <person name="da Silva A.C.R."/>
            <person name="Ferro J.A."/>
            <person name="Reinach F.C."/>
            <person name="Farah C.S."/>
            <person name="Furlan L.R."/>
            <person name="Quaggio R.B."/>
            <person name="Monteiro-Vitorello C.B."/>
            <person name="Van Sluys M.A."/>
            <person name="Almeida N.F. Jr."/>
            <person name="Alves L.M.C."/>
            <person name="do Amaral A.M."/>
            <person name="Bertolini M.C."/>
            <person name="Camargo L.E.A."/>
            <person name="Camarotte G."/>
            <person name="Cannavan F."/>
            <person name="Cardozo J."/>
            <person name="Chambergo F."/>
            <person name="Ciapina L.P."/>
            <person name="Cicarelli R.M.B."/>
            <person name="Coutinho L.L."/>
            <person name="Cursino-Santos J.R."/>
            <person name="El-Dorry H."/>
            <person name="Faria J.B."/>
            <person name="Ferreira A.J.S."/>
            <person name="Ferreira R.C.C."/>
            <person name="Ferro M.I.T."/>
            <person name="Formighieri E.F."/>
            <person name="Franco M.C."/>
            <person name="Greggio C.C."/>
            <person name="Gruber A."/>
            <person name="Katsuyama A.M."/>
            <person name="Kishi L.T."/>
            <person name="Leite R.P."/>
            <person name="Lemos E.G.M."/>
            <person name="Lemos M.V.F."/>
            <person name="Locali E.C."/>
            <person name="Machado M.A."/>
            <person name="Madeira A.M.B.N."/>
            <person name="Martinez-Rossi N.M."/>
            <person name="Martins E.C."/>
            <person name="Meidanis J."/>
            <person name="Menck C.F.M."/>
            <person name="Miyaki C.Y."/>
            <person name="Moon D.H."/>
            <person name="Moreira L.M."/>
            <person name="Novo M.T.M."/>
            <person name="Okura V.K."/>
            <person name="Oliveira M.C."/>
            <person name="Oliveira V.R."/>
            <person name="Pereira H.A."/>
            <person name="Rossi A."/>
            <person name="Sena J.A.D."/>
            <person name="Silva C."/>
            <person name="de Souza R.F."/>
            <person name="Spinola L.A.F."/>
            <person name="Takita M.A."/>
            <person name="Tamura R.E."/>
            <person name="Teixeira E.C."/>
            <person name="Tezza R.I.D."/>
            <person name="Trindade dos Santos M."/>
            <person name="Truffi D."/>
            <person name="Tsai S.M."/>
            <person name="White F.F."/>
            <person name="Setubal J.C."/>
            <person name="Kitajima J.P."/>
        </authorList>
    </citation>
    <scope>NUCLEOTIDE SEQUENCE [LARGE SCALE GENOMIC DNA]</scope>
    <source>
        <strain>306</strain>
    </source>
</reference>
<keyword id="KW-0067">ATP-binding</keyword>
<keyword id="KW-0436">Ligase</keyword>
<keyword id="KW-0479">Metal-binding</keyword>
<keyword id="KW-0547">Nucleotide-binding</keyword>
<keyword id="KW-0671">Queuosine biosynthesis</keyword>
<keyword id="KW-0862">Zinc</keyword>
<protein>
    <recommendedName>
        <fullName evidence="1">7-cyano-7-deazaguanine synthase</fullName>
        <ecNumber evidence="1">6.3.4.20</ecNumber>
    </recommendedName>
    <alternativeName>
        <fullName evidence="1">7-cyano-7-carbaguanine synthase</fullName>
    </alternativeName>
    <alternativeName>
        <fullName evidence="1">PreQ(0) synthase</fullName>
    </alternativeName>
    <alternativeName>
        <fullName evidence="1">Queuosine biosynthesis protein QueC</fullName>
    </alternativeName>
</protein>
<comment type="function">
    <text evidence="1">Catalyzes the ATP-dependent conversion of 7-carboxy-7-deazaguanine (CDG) to 7-cyano-7-deazaguanine (preQ(0)).</text>
</comment>
<comment type="catalytic activity">
    <reaction evidence="1">
        <text>7-carboxy-7-deazaguanine + NH4(+) + ATP = 7-cyano-7-deazaguanine + ADP + phosphate + H2O + H(+)</text>
        <dbReference type="Rhea" id="RHEA:27982"/>
        <dbReference type="ChEBI" id="CHEBI:15377"/>
        <dbReference type="ChEBI" id="CHEBI:15378"/>
        <dbReference type="ChEBI" id="CHEBI:28938"/>
        <dbReference type="ChEBI" id="CHEBI:30616"/>
        <dbReference type="ChEBI" id="CHEBI:43474"/>
        <dbReference type="ChEBI" id="CHEBI:45075"/>
        <dbReference type="ChEBI" id="CHEBI:61036"/>
        <dbReference type="ChEBI" id="CHEBI:456216"/>
        <dbReference type="EC" id="6.3.4.20"/>
    </reaction>
</comment>
<comment type="cofactor">
    <cofactor evidence="1">
        <name>Zn(2+)</name>
        <dbReference type="ChEBI" id="CHEBI:29105"/>
    </cofactor>
    <text evidence="1">Binds 1 zinc ion per subunit.</text>
</comment>
<comment type="pathway">
    <text evidence="1">Purine metabolism; 7-cyano-7-deazaguanine biosynthesis.</text>
</comment>
<comment type="similarity">
    <text evidence="1">Belongs to the QueC family.</text>
</comment>